<gene>
    <name evidence="1" type="primary">pnp</name>
    <name type="ordered locus">Cvib_1424</name>
</gene>
<proteinExistence type="inferred from homology"/>
<dbReference type="EC" id="2.7.7.8" evidence="1"/>
<dbReference type="EMBL" id="CP000607">
    <property type="protein sequence ID" value="ABP37435.1"/>
    <property type="molecule type" value="Genomic_DNA"/>
</dbReference>
<dbReference type="SMR" id="A4SG26"/>
<dbReference type="STRING" id="290318.Cvib_1424"/>
<dbReference type="KEGG" id="pvi:Cvib_1424"/>
<dbReference type="eggNOG" id="COG1185">
    <property type="taxonomic scope" value="Bacteria"/>
</dbReference>
<dbReference type="HOGENOM" id="CLU_004217_2_2_10"/>
<dbReference type="OrthoDB" id="9804305at2"/>
<dbReference type="GO" id="GO:0005829">
    <property type="term" value="C:cytosol"/>
    <property type="evidence" value="ECO:0007669"/>
    <property type="project" value="TreeGrafter"/>
</dbReference>
<dbReference type="GO" id="GO:0000175">
    <property type="term" value="F:3'-5'-RNA exonuclease activity"/>
    <property type="evidence" value="ECO:0007669"/>
    <property type="project" value="TreeGrafter"/>
</dbReference>
<dbReference type="GO" id="GO:0000287">
    <property type="term" value="F:magnesium ion binding"/>
    <property type="evidence" value="ECO:0007669"/>
    <property type="project" value="UniProtKB-UniRule"/>
</dbReference>
<dbReference type="GO" id="GO:0004654">
    <property type="term" value="F:polyribonucleotide nucleotidyltransferase activity"/>
    <property type="evidence" value="ECO:0007669"/>
    <property type="project" value="UniProtKB-UniRule"/>
</dbReference>
<dbReference type="GO" id="GO:0003723">
    <property type="term" value="F:RNA binding"/>
    <property type="evidence" value="ECO:0007669"/>
    <property type="project" value="UniProtKB-UniRule"/>
</dbReference>
<dbReference type="GO" id="GO:0006402">
    <property type="term" value="P:mRNA catabolic process"/>
    <property type="evidence" value="ECO:0007669"/>
    <property type="project" value="UniProtKB-UniRule"/>
</dbReference>
<dbReference type="GO" id="GO:0006396">
    <property type="term" value="P:RNA processing"/>
    <property type="evidence" value="ECO:0007669"/>
    <property type="project" value="InterPro"/>
</dbReference>
<dbReference type="CDD" id="cd02393">
    <property type="entry name" value="KH-I_PNPase"/>
    <property type="match status" value="1"/>
</dbReference>
<dbReference type="CDD" id="cd11363">
    <property type="entry name" value="RNase_PH_PNPase_1"/>
    <property type="match status" value="1"/>
</dbReference>
<dbReference type="CDD" id="cd11364">
    <property type="entry name" value="RNase_PH_PNPase_2"/>
    <property type="match status" value="1"/>
</dbReference>
<dbReference type="FunFam" id="3.30.1370.10:FF:000001">
    <property type="entry name" value="Polyribonucleotide nucleotidyltransferase"/>
    <property type="match status" value="1"/>
</dbReference>
<dbReference type="FunFam" id="3.30.230.70:FF:000001">
    <property type="entry name" value="Polyribonucleotide nucleotidyltransferase"/>
    <property type="match status" value="1"/>
</dbReference>
<dbReference type="FunFam" id="3.30.230.70:FF:000002">
    <property type="entry name" value="Polyribonucleotide nucleotidyltransferase"/>
    <property type="match status" value="1"/>
</dbReference>
<dbReference type="Gene3D" id="3.30.230.70">
    <property type="entry name" value="GHMP Kinase, N-terminal domain"/>
    <property type="match status" value="2"/>
</dbReference>
<dbReference type="Gene3D" id="3.30.1370.10">
    <property type="entry name" value="K Homology domain, type 1"/>
    <property type="match status" value="1"/>
</dbReference>
<dbReference type="Gene3D" id="2.40.50.140">
    <property type="entry name" value="Nucleic acid-binding proteins"/>
    <property type="match status" value="1"/>
</dbReference>
<dbReference type="HAMAP" id="MF_01595">
    <property type="entry name" value="PNPase"/>
    <property type="match status" value="1"/>
</dbReference>
<dbReference type="InterPro" id="IPR001247">
    <property type="entry name" value="ExoRNase_PH_dom1"/>
</dbReference>
<dbReference type="InterPro" id="IPR015847">
    <property type="entry name" value="ExoRNase_PH_dom2"/>
</dbReference>
<dbReference type="InterPro" id="IPR036345">
    <property type="entry name" value="ExoRNase_PH_dom2_sf"/>
</dbReference>
<dbReference type="InterPro" id="IPR004087">
    <property type="entry name" value="KH_dom"/>
</dbReference>
<dbReference type="InterPro" id="IPR004088">
    <property type="entry name" value="KH_dom_type_1"/>
</dbReference>
<dbReference type="InterPro" id="IPR036612">
    <property type="entry name" value="KH_dom_type_1_sf"/>
</dbReference>
<dbReference type="InterPro" id="IPR012340">
    <property type="entry name" value="NA-bd_OB-fold"/>
</dbReference>
<dbReference type="InterPro" id="IPR012162">
    <property type="entry name" value="PNPase"/>
</dbReference>
<dbReference type="InterPro" id="IPR027408">
    <property type="entry name" value="PNPase/RNase_PH_dom_sf"/>
</dbReference>
<dbReference type="InterPro" id="IPR015848">
    <property type="entry name" value="PNPase_PH_RNA-bd_bac/org-type"/>
</dbReference>
<dbReference type="InterPro" id="IPR020568">
    <property type="entry name" value="Ribosomal_Su5_D2-typ_SF"/>
</dbReference>
<dbReference type="InterPro" id="IPR003029">
    <property type="entry name" value="S1_domain"/>
</dbReference>
<dbReference type="NCBIfam" id="TIGR03591">
    <property type="entry name" value="polynuc_phos"/>
    <property type="match status" value="1"/>
</dbReference>
<dbReference type="NCBIfam" id="NF008805">
    <property type="entry name" value="PRK11824.1"/>
    <property type="match status" value="1"/>
</dbReference>
<dbReference type="PANTHER" id="PTHR11252">
    <property type="entry name" value="POLYRIBONUCLEOTIDE NUCLEOTIDYLTRANSFERASE"/>
    <property type="match status" value="1"/>
</dbReference>
<dbReference type="PANTHER" id="PTHR11252:SF0">
    <property type="entry name" value="POLYRIBONUCLEOTIDE NUCLEOTIDYLTRANSFERASE 1, MITOCHONDRIAL"/>
    <property type="match status" value="1"/>
</dbReference>
<dbReference type="Pfam" id="PF00013">
    <property type="entry name" value="KH_1"/>
    <property type="match status" value="1"/>
</dbReference>
<dbReference type="Pfam" id="PF03726">
    <property type="entry name" value="PNPase"/>
    <property type="match status" value="1"/>
</dbReference>
<dbReference type="Pfam" id="PF01138">
    <property type="entry name" value="RNase_PH"/>
    <property type="match status" value="2"/>
</dbReference>
<dbReference type="Pfam" id="PF03725">
    <property type="entry name" value="RNase_PH_C"/>
    <property type="match status" value="2"/>
</dbReference>
<dbReference type="Pfam" id="PF00575">
    <property type="entry name" value="S1"/>
    <property type="match status" value="1"/>
</dbReference>
<dbReference type="PIRSF" id="PIRSF005499">
    <property type="entry name" value="PNPase"/>
    <property type="match status" value="1"/>
</dbReference>
<dbReference type="SMART" id="SM00322">
    <property type="entry name" value="KH"/>
    <property type="match status" value="1"/>
</dbReference>
<dbReference type="SMART" id="SM00316">
    <property type="entry name" value="S1"/>
    <property type="match status" value="1"/>
</dbReference>
<dbReference type="SUPFAM" id="SSF54791">
    <property type="entry name" value="Eukaryotic type KH-domain (KH-domain type I)"/>
    <property type="match status" value="1"/>
</dbReference>
<dbReference type="SUPFAM" id="SSF50249">
    <property type="entry name" value="Nucleic acid-binding proteins"/>
    <property type="match status" value="1"/>
</dbReference>
<dbReference type="SUPFAM" id="SSF55666">
    <property type="entry name" value="Ribonuclease PH domain 2-like"/>
    <property type="match status" value="2"/>
</dbReference>
<dbReference type="SUPFAM" id="SSF54211">
    <property type="entry name" value="Ribosomal protein S5 domain 2-like"/>
    <property type="match status" value="2"/>
</dbReference>
<dbReference type="PROSITE" id="PS50084">
    <property type="entry name" value="KH_TYPE_1"/>
    <property type="match status" value="1"/>
</dbReference>
<dbReference type="PROSITE" id="PS50126">
    <property type="entry name" value="S1"/>
    <property type="match status" value="1"/>
</dbReference>
<evidence type="ECO:0000255" key="1">
    <source>
        <dbReference type="HAMAP-Rule" id="MF_01595"/>
    </source>
</evidence>
<keyword id="KW-0963">Cytoplasm</keyword>
<keyword id="KW-0460">Magnesium</keyword>
<keyword id="KW-0479">Metal-binding</keyword>
<keyword id="KW-0548">Nucleotidyltransferase</keyword>
<keyword id="KW-0694">RNA-binding</keyword>
<keyword id="KW-0808">Transferase</keyword>
<feature type="chain" id="PRO_1000087995" description="Polyribonucleotide nucleotidyltransferase">
    <location>
        <begin position="1"/>
        <end position="732"/>
    </location>
</feature>
<feature type="domain" description="KH" evidence="1">
    <location>
        <begin position="570"/>
        <end position="629"/>
    </location>
</feature>
<feature type="domain" description="S1 motif" evidence="1">
    <location>
        <begin position="639"/>
        <end position="713"/>
    </location>
</feature>
<feature type="binding site" evidence="1">
    <location>
        <position position="503"/>
    </location>
    <ligand>
        <name>Mg(2+)</name>
        <dbReference type="ChEBI" id="CHEBI:18420"/>
    </ligand>
</feature>
<feature type="binding site" evidence="1">
    <location>
        <position position="509"/>
    </location>
    <ligand>
        <name>Mg(2+)</name>
        <dbReference type="ChEBI" id="CHEBI:18420"/>
    </ligand>
</feature>
<sequence>MIITKEIDLGQGKTISIETGRMAKQADGATVVRMGDTMVIATVVSSKKTPSPNQDFFPLQVEYREKYYAAGKFPGGFFKREARPSEKEILSARLIDRALRPLFPTGYYYETQVIINVISSDQQNDADVLGGLAASAAIMVSDIPFENAMSEVRVGRVNGQFIINPTIDELEGSDIDISIGGTAGTICMLEGEMKEISEAEMLEAIRFGHEAIKKLCALQDSVQAAVAKAKRPFAPLQVPSELGAFISDACKARLKELAYTALAKEERAERTKEIYGETLKSAVEHFSAAFSSEDLAADPSKALCTNEHIIEEEIHSVEKDVMRRMILDDAKRLDGRTLDQVRPISIDLGVIPRAHGSALFTRGETQALVAVTLGTKKDAQSVDTLTNSADKRFMLHYNFPPFSVGEVGRLGTTGRREIGHGNLAERAIRMVAPTEQEFPYTIRIVSEILESNGSSSMASVCGGTLALMDGGVPLKKAVSGIAMGLIKEGSEYAVLSDILGNEDHLGDMDFKVSGTRDGITACQMDIKIDGLDYHILETALEQARRGRFHILDKMEEAIPASREDLAHYAPRLTAIQVPVESIGLIIGKGGETIRSITEETGAEINIEDDGTVTIACSSNEGTKGAVEIIKALIAKPEVGTVYIGKVRDIRDELGAFVEFIPKTDGLVHISEIANERVAKVSDHLKVGERVKVKLVDIRKDPRTGKTRFALSIKAALDAPDPGTEAAAAETNS</sequence>
<organism>
    <name type="scientific">Chlorobium phaeovibrioides (strain DSM 265 / 1930)</name>
    <name type="common">Prosthecochloris vibrioformis (strain DSM 265)</name>
    <dbReference type="NCBI Taxonomy" id="290318"/>
    <lineage>
        <taxon>Bacteria</taxon>
        <taxon>Pseudomonadati</taxon>
        <taxon>Chlorobiota</taxon>
        <taxon>Chlorobiia</taxon>
        <taxon>Chlorobiales</taxon>
        <taxon>Chlorobiaceae</taxon>
        <taxon>Chlorobium/Pelodictyon group</taxon>
        <taxon>Chlorobium</taxon>
    </lineage>
</organism>
<protein>
    <recommendedName>
        <fullName evidence="1">Polyribonucleotide nucleotidyltransferase</fullName>
        <ecNumber evidence="1">2.7.7.8</ecNumber>
    </recommendedName>
    <alternativeName>
        <fullName evidence="1">Polynucleotide phosphorylase</fullName>
        <shortName evidence="1">PNPase</shortName>
    </alternativeName>
</protein>
<comment type="function">
    <text evidence="1">Involved in mRNA degradation. Catalyzes the phosphorolysis of single-stranded polyribonucleotides processively in the 3'- to 5'-direction.</text>
</comment>
<comment type="catalytic activity">
    <reaction evidence="1">
        <text>RNA(n+1) + phosphate = RNA(n) + a ribonucleoside 5'-diphosphate</text>
        <dbReference type="Rhea" id="RHEA:22096"/>
        <dbReference type="Rhea" id="RHEA-COMP:14527"/>
        <dbReference type="Rhea" id="RHEA-COMP:17342"/>
        <dbReference type="ChEBI" id="CHEBI:43474"/>
        <dbReference type="ChEBI" id="CHEBI:57930"/>
        <dbReference type="ChEBI" id="CHEBI:140395"/>
        <dbReference type="EC" id="2.7.7.8"/>
    </reaction>
</comment>
<comment type="cofactor">
    <cofactor evidence="1">
        <name>Mg(2+)</name>
        <dbReference type="ChEBI" id="CHEBI:18420"/>
    </cofactor>
</comment>
<comment type="subcellular location">
    <subcellularLocation>
        <location evidence="1">Cytoplasm</location>
    </subcellularLocation>
</comment>
<comment type="similarity">
    <text evidence="1">Belongs to the polyribonucleotide nucleotidyltransferase family.</text>
</comment>
<accession>A4SG26</accession>
<reference key="1">
    <citation type="submission" date="2007-03" db="EMBL/GenBank/DDBJ databases">
        <title>Complete sequence of Prosthecochloris vibrioformis DSM 265.</title>
        <authorList>
            <consortium name="US DOE Joint Genome Institute"/>
            <person name="Copeland A."/>
            <person name="Lucas S."/>
            <person name="Lapidus A."/>
            <person name="Barry K."/>
            <person name="Detter J.C."/>
            <person name="Glavina del Rio T."/>
            <person name="Hammon N."/>
            <person name="Israni S."/>
            <person name="Pitluck S."/>
            <person name="Schmutz J."/>
            <person name="Larimer F."/>
            <person name="Land M."/>
            <person name="Hauser L."/>
            <person name="Mikhailova N."/>
            <person name="Li T."/>
            <person name="Overmann J."/>
            <person name="Schuster S.C."/>
            <person name="Bryant D.A."/>
            <person name="Richardson P."/>
        </authorList>
    </citation>
    <scope>NUCLEOTIDE SEQUENCE [LARGE SCALE GENOMIC DNA]</scope>
    <source>
        <strain>DSM 265 / 1930</strain>
    </source>
</reference>
<name>PNP_CHLPM</name>